<gene>
    <name evidence="1" type="primary">rplV</name>
    <name type="ordered locus">Lxx20280</name>
</gene>
<sequence>MVESIARVRHIRVTPMKARRVVNMIRGKQAQEALAILKFAPQGASEPVYKLVASAIANARVKADQSNTYLDEQDLYVSRAFVDEGTTLKRFQPRAQGRAFRINKRTSHITVVLATPDEAEAAQPAKKASTAKKASN</sequence>
<accession>Q6AD00</accession>
<evidence type="ECO:0000255" key="1">
    <source>
        <dbReference type="HAMAP-Rule" id="MF_01331"/>
    </source>
</evidence>
<evidence type="ECO:0000305" key="2"/>
<organism>
    <name type="scientific">Leifsonia xyli subsp. xyli (strain CTCB07)</name>
    <dbReference type="NCBI Taxonomy" id="281090"/>
    <lineage>
        <taxon>Bacteria</taxon>
        <taxon>Bacillati</taxon>
        <taxon>Actinomycetota</taxon>
        <taxon>Actinomycetes</taxon>
        <taxon>Micrococcales</taxon>
        <taxon>Microbacteriaceae</taxon>
        <taxon>Leifsonia</taxon>
    </lineage>
</organism>
<name>RL22_LEIXX</name>
<reference key="1">
    <citation type="journal article" date="2004" name="Mol. Plant Microbe Interact.">
        <title>The genome sequence of the Gram-positive sugarcane pathogen Leifsonia xyli subsp. xyli.</title>
        <authorList>
            <person name="Monteiro-Vitorello C.B."/>
            <person name="Camargo L.E.A."/>
            <person name="Van Sluys M.A."/>
            <person name="Kitajima J.P."/>
            <person name="Truffi D."/>
            <person name="do Amaral A.M."/>
            <person name="Harakava R."/>
            <person name="de Oliveira J.C.F."/>
            <person name="Wood D."/>
            <person name="de Oliveira M.C."/>
            <person name="Miyaki C.Y."/>
            <person name="Takita M.A."/>
            <person name="da Silva A.C.R."/>
            <person name="Furlan L.R."/>
            <person name="Carraro D.M."/>
            <person name="Camarotte G."/>
            <person name="Almeida N.F. Jr."/>
            <person name="Carrer H."/>
            <person name="Coutinho L.L."/>
            <person name="El-Dorry H.A."/>
            <person name="Ferro M.I.T."/>
            <person name="Gagliardi P.R."/>
            <person name="Giglioti E."/>
            <person name="Goldman M.H.S."/>
            <person name="Goldman G.H."/>
            <person name="Kimura E.T."/>
            <person name="Ferro E.S."/>
            <person name="Kuramae E.E."/>
            <person name="Lemos E.G.M."/>
            <person name="Lemos M.V.F."/>
            <person name="Mauro S.M.Z."/>
            <person name="Machado M.A."/>
            <person name="Marino C.L."/>
            <person name="Menck C.F."/>
            <person name="Nunes L.R."/>
            <person name="Oliveira R.C."/>
            <person name="Pereira G.G."/>
            <person name="Siqueira W."/>
            <person name="de Souza A.A."/>
            <person name="Tsai S.M."/>
            <person name="Zanca A.S."/>
            <person name="Simpson A.J.G."/>
            <person name="Brumbley S.M."/>
            <person name="Setubal J.C."/>
        </authorList>
    </citation>
    <scope>NUCLEOTIDE SEQUENCE [LARGE SCALE GENOMIC DNA]</scope>
    <source>
        <strain>CTCB07</strain>
    </source>
</reference>
<dbReference type="EMBL" id="AE016822">
    <property type="protein sequence ID" value="AAT89744.1"/>
    <property type="molecule type" value="Genomic_DNA"/>
</dbReference>
<dbReference type="RefSeq" id="WP_011186730.1">
    <property type="nucleotide sequence ID" value="NC_006087.1"/>
</dbReference>
<dbReference type="SMR" id="Q6AD00"/>
<dbReference type="STRING" id="281090.Lxx20280"/>
<dbReference type="KEGG" id="lxx:Lxx20280"/>
<dbReference type="eggNOG" id="COG0091">
    <property type="taxonomic scope" value="Bacteria"/>
</dbReference>
<dbReference type="HOGENOM" id="CLU_083987_3_3_11"/>
<dbReference type="Proteomes" id="UP000001306">
    <property type="component" value="Chromosome"/>
</dbReference>
<dbReference type="GO" id="GO:0022625">
    <property type="term" value="C:cytosolic large ribosomal subunit"/>
    <property type="evidence" value="ECO:0007669"/>
    <property type="project" value="TreeGrafter"/>
</dbReference>
<dbReference type="GO" id="GO:0019843">
    <property type="term" value="F:rRNA binding"/>
    <property type="evidence" value="ECO:0007669"/>
    <property type="project" value="UniProtKB-UniRule"/>
</dbReference>
<dbReference type="GO" id="GO:0003735">
    <property type="term" value="F:structural constituent of ribosome"/>
    <property type="evidence" value="ECO:0007669"/>
    <property type="project" value="InterPro"/>
</dbReference>
<dbReference type="GO" id="GO:0006412">
    <property type="term" value="P:translation"/>
    <property type="evidence" value="ECO:0007669"/>
    <property type="project" value="UniProtKB-UniRule"/>
</dbReference>
<dbReference type="CDD" id="cd00336">
    <property type="entry name" value="Ribosomal_L22"/>
    <property type="match status" value="1"/>
</dbReference>
<dbReference type="Gene3D" id="3.90.470.10">
    <property type="entry name" value="Ribosomal protein L22/L17"/>
    <property type="match status" value="1"/>
</dbReference>
<dbReference type="HAMAP" id="MF_01331_B">
    <property type="entry name" value="Ribosomal_uL22_B"/>
    <property type="match status" value="1"/>
</dbReference>
<dbReference type="InterPro" id="IPR001063">
    <property type="entry name" value="Ribosomal_uL22"/>
</dbReference>
<dbReference type="InterPro" id="IPR005727">
    <property type="entry name" value="Ribosomal_uL22_bac/chlpt-type"/>
</dbReference>
<dbReference type="InterPro" id="IPR047867">
    <property type="entry name" value="Ribosomal_uL22_bac/org-type"/>
</dbReference>
<dbReference type="InterPro" id="IPR018260">
    <property type="entry name" value="Ribosomal_uL22_CS"/>
</dbReference>
<dbReference type="InterPro" id="IPR036394">
    <property type="entry name" value="Ribosomal_uL22_sf"/>
</dbReference>
<dbReference type="NCBIfam" id="TIGR01044">
    <property type="entry name" value="rplV_bact"/>
    <property type="match status" value="1"/>
</dbReference>
<dbReference type="PANTHER" id="PTHR13501">
    <property type="entry name" value="CHLOROPLAST 50S RIBOSOMAL PROTEIN L22-RELATED"/>
    <property type="match status" value="1"/>
</dbReference>
<dbReference type="PANTHER" id="PTHR13501:SF8">
    <property type="entry name" value="LARGE RIBOSOMAL SUBUNIT PROTEIN UL22M"/>
    <property type="match status" value="1"/>
</dbReference>
<dbReference type="Pfam" id="PF00237">
    <property type="entry name" value="Ribosomal_L22"/>
    <property type="match status" value="1"/>
</dbReference>
<dbReference type="SUPFAM" id="SSF54843">
    <property type="entry name" value="Ribosomal protein L22"/>
    <property type="match status" value="1"/>
</dbReference>
<dbReference type="PROSITE" id="PS00464">
    <property type="entry name" value="RIBOSOMAL_L22"/>
    <property type="match status" value="1"/>
</dbReference>
<keyword id="KW-1185">Reference proteome</keyword>
<keyword id="KW-0687">Ribonucleoprotein</keyword>
<keyword id="KW-0689">Ribosomal protein</keyword>
<keyword id="KW-0694">RNA-binding</keyword>
<keyword id="KW-0699">rRNA-binding</keyword>
<proteinExistence type="inferred from homology"/>
<feature type="chain" id="PRO_0000243164" description="Large ribosomal subunit protein uL22">
    <location>
        <begin position="1"/>
        <end position="136"/>
    </location>
</feature>
<protein>
    <recommendedName>
        <fullName evidence="1">Large ribosomal subunit protein uL22</fullName>
    </recommendedName>
    <alternativeName>
        <fullName evidence="2">50S ribosomal protein L22</fullName>
    </alternativeName>
</protein>
<comment type="function">
    <text evidence="1">This protein binds specifically to 23S rRNA; its binding is stimulated by other ribosomal proteins, e.g. L4, L17, and L20. It is important during the early stages of 50S assembly. It makes multiple contacts with different domains of the 23S rRNA in the assembled 50S subunit and ribosome (By similarity).</text>
</comment>
<comment type="function">
    <text evidence="1">The globular domain of the protein is located near the polypeptide exit tunnel on the outside of the subunit, while an extended beta-hairpin is found that lines the wall of the exit tunnel in the center of the 70S ribosome.</text>
</comment>
<comment type="subunit">
    <text evidence="1">Part of the 50S ribosomal subunit.</text>
</comment>
<comment type="similarity">
    <text evidence="1">Belongs to the universal ribosomal protein uL22 family.</text>
</comment>